<evidence type="ECO:0000255" key="1">
    <source>
        <dbReference type="HAMAP-Rule" id="MF_01605"/>
    </source>
</evidence>
<dbReference type="EC" id="3.1.1.31" evidence="1"/>
<dbReference type="EMBL" id="CP000653">
    <property type="protein sequence ID" value="ABP59939.1"/>
    <property type="molecule type" value="Genomic_DNA"/>
</dbReference>
<dbReference type="RefSeq" id="WP_012016658.1">
    <property type="nucleotide sequence ID" value="NC_009436.1"/>
</dbReference>
<dbReference type="SMR" id="A4W8A9"/>
<dbReference type="STRING" id="399742.Ent638_1258"/>
<dbReference type="KEGG" id="ent:Ent638_1258"/>
<dbReference type="eggNOG" id="COG2706">
    <property type="taxonomic scope" value="Bacteria"/>
</dbReference>
<dbReference type="HOGENOM" id="CLU_038716_2_0_6"/>
<dbReference type="OrthoDB" id="9790815at2"/>
<dbReference type="UniPathway" id="UPA00115">
    <property type="reaction ID" value="UER00409"/>
</dbReference>
<dbReference type="Proteomes" id="UP000000230">
    <property type="component" value="Chromosome"/>
</dbReference>
<dbReference type="GO" id="GO:0005829">
    <property type="term" value="C:cytosol"/>
    <property type="evidence" value="ECO:0007669"/>
    <property type="project" value="TreeGrafter"/>
</dbReference>
<dbReference type="GO" id="GO:0017057">
    <property type="term" value="F:6-phosphogluconolactonase activity"/>
    <property type="evidence" value="ECO:0007669"/>
    <property type="project" value="UniProtKB-UniRule"/>
</dbReference>
<dbReference type="GO" id="GO:0006006">
    <property type="term" value="P:glucose metabolic process"/>
    <property type="evidence" value="ECO:0007669"/>
    <property type="project" value="UniProtKB-KW"/>
</dbReference>
<dbReference type="GO" id="GO:0009051">
    <property type="term" value="P:pentose-phosphate shunt, oxidative branch"/>
    <property type="evidence" value="ECO:0007669"/>
    <property type="project" value="UniProtKB-UniRule"/>
</dbReference>
<dbReference type="FunFam" id="2.130.10.10:FF:000051">
    <property type="entry name" value="6-phosphogluconolactonase"/>
    <property type="match status" value="1"/>
</dbReference>
<dbReference type="Gene3D" id="2.130.10.10">
    <property type="entry name" value="YVTN repeat-like/Quinoprotein amine dehydrogenase"/>
    <property type="match status" value="1"/>
</dbReference>
<dbReference type="HAMAP" id="MF_01605">
    <property type="entry name" value="6P_gluconolactonase"/>
    <property type="match status" value="1"/>
</dbReference>
<dbReference type="InterPro" id="IPR022528">
    <property type="entry name" value="6-phosphogluconolactonase_YbhE"/>
</dbReference>
<dbReference type="InterPro" id="IPR050282">
    <property type="entry name" value="Cycloisomerase_2"/>
</dbReference>
<dbReference type="InterPro" id="IPR019405">
    <property type="entry name" value="Lactonase_7-beta_prop"/>
</dbReference>
<dbReference type="InterPro" id="IPR011045">
    <property type="entry name" value="N2O_reductase_N"/>
</dbReference>
<dbReference type="InterPro" id="IPR015943">
    <property type="entry name" value="WD40/YVTN_repeat-like_dom_sf"/>
</dbReference>
<dbReference type="NCBIfam" id="NF008258">
    <property type="entry name" value="PRK11028.1"/>
    <property type="match status" value="1"/>
</dbReference>
<dbReference type="PANTHER" id="PTHR30344:SF1">
    <property type="entry name" value="6-PHOSPHOGLUCONOLACTONASE"/>
    <property type="match status" value="1"/>
</dbReference>
<dbReference type="PANTHER" id="PTHR30344">
    <property type="entry name" value="6-PHOSPHOGLUCONOLACTONASE-RELATED"/>
    <property type="match status" value="1"/>
</dbReference>
<dbReference type="Pfam" id="PF10282">
    <property type="entry name" value="Lactonase"/>
    <property type="match status" value="1"/>
</dbReference>
<dbReference type="SUPFAM" id="SSF50974">
    <property type="entry name" value="Nitrous oxide reductase, N-terminal domain"/>
    <property type="match status" value="1"/>
</dbReference>
<sequence>MKQTVYTASPESQQIHVWRLNTEGSLTLVQVVDVPGQVQPMVVSPDKRFLYVGVRPEFRVLAYRISPDDGALTFAAEAPLPGSPTHISTDRQGRFIFSGSYNAGSVSVTRLEDGIPVETVDIVEGLEGCHSANISPDNRTLWVPALKQDRICLFTLSDDGHLQAQNPAEVTTVEGAGPRHMVFHPNQQYAYVVNELNSSVDVWELHNPNGQIECIQTLDIMPADFADTRWAADIHITPDGRHLYACDRTSSLITVFSISEDGSVLAIEGFQPTETQPRGFNIDNSGKFLIAAGQKSHHIALYEIKGVQGLLEEKGRYAVGQGPMWVVVNAH</sequence>
<name>6PGL_ENT38</name>
<organism>
    <name type="scientific">Enterobacter sp. (strain 638)</name>
    <dbReference type="NCBI Taxonomy" id="399742"/>
    <lineage>
        <taxon>Bacteria</taxon>
        <taxon>Pseudomonadati</taxon>
        <taxon>Pseudomonadota</taxon>
        <taxon>Gammaproteobacteria</taxon>
        <taxon>Enterobacterales</taxon>
        <taxon>Enterobacteriaceae</taxon>
        <taxon>Enterobacter</taxon>
    </lineage>
</organism>
<protein>
    <recommendedName>
        <fullName evidence="1">6-phosphogluconolactonase</fullName>
        <shortName evidence="1">6-P-gluconolactonase</shortName>
        <ecNumber evidence="1">3.1.1.31</ecNumber>
    </recommendedName>
</protein>
<accession>A4W8A9</accession>
<feature type="chain" id="PRO_1000069410" description="6-phosphogluconolactonase">
    <location>
        <begin position="1"/>
        <end position="331"/>
    </location>
</feature>
<reference key="1">
    <citation type="journal article" date="2010" name="PLoS Genet.">
        <title>Genome sequence of the plant growth promoting endophytic bacterium Enterobacter sp. 638.</title>
        <authorList>
            <person name="Taghavi S."/>
            <person name="van der Lelie D."/>
            <person name="Hoffman A."/>
            <person name="Zhang Y.B."/>
            <person name="Walla M.D."/>
            <person name="Vangronsveld J."/>
            <person name="Newman L."/>
            <person name="Monchy S."/>
        </authorList>
    </citation>
    <scope>NUCLEOTIDE SEQUENCE [LARGE SCALE GENOMIC DNA]</scope>
    <source>
        <strain>638</strain>
    </source>
</reference>
<keyword id="KW-0119">Carbohydrate metabolism</keyword>
<keyword id="KW-0313">Glucose metabolism</keyword>
<keyword id="KW-0378">Hydrolase</keyword>
<gene>
    <name evidence="1" type="primary">pgl</name>
    <name type="ordered locus">Ent638_1258</name>
</gene>
<comment type="function">
    <text evidence="1">Catalyzes the hydrolysis of 6-phosphogluconolactone to 6-phosphogluconate.</text>
</comment>
<comment type="catalytic activity">
    <reaction evidence="1">
        <text>6-phospho-D-glucono-1,5-lactone + H2O = 6-phospho-D-gluconate + H(+)</text>
        <dbReference type="Rhea" id="RHEA:12556"/>
        <dbReference type="ChEBI" id="CHEBI:15377"/>
        <dbReference type="ChEBI" id="CHEBI:15378"/>
        <dbReference type="ChEBI" id="CHEBI:57955"/>
        <dbReference type="ChEBI" id="CHEBI:58759"/>
        <dbReference type="EC" id="3.1.1.31"/>
    </reaction>
</comment>
<comment type="pathway">
    <text evidence="1">Carbohydrate degradation; pentose phosphate pathway; D-ribulose 5-phosphate from D-glucose 6-phosphate (oxidative stage): step 2/3.</text>
</comment>
<comment type="similarity">
    <text evidence="1">Belongs to the cycloisomerase 2 family.</text>
</comment>
<proteinExistence type="inferred from homology"/>